<feature type="chain" id="PRO_0000235506" description="Aspartate--tRNA(Asp/Asn) ligase">
    <location>
        <begin position="1"/>
        <end position="603"/>
    </location>
</feature>
<feature type="region of interest" description="Aspartate" evidence="1">
    <location>
        <begin position="205"/>
        <end position="208"/>
    </location>
</feature>
<feature type="binding site" evidence="1">
    <location>
        <begin position="227"/>
        <end position="229"/>
    </location>
    <ligand>
        <name>ATP</name>
        <dbReference type="ChEBI" id="CHEBI:30616"/>
    </ligand>
</feature>
<feature type="binding site" evidence="1">
    <location>
        <position position="227"/>
    </location>
    <ligand>
        <name>L-aspartate</name>
        <dbReference type="ChEBI" id="CHEBI:29991"/>
    </ligand>
</feature>
<feature type="binding site" evidence="1">
    <location>
        <position position="236"/>
    </location>
    <ligand>
        <name>ATP</name>
        <dbReference type="ChEBI" id="CHEBI:30616"/>
    </ligand>
</feature>
<feature type="binding site" evidence="1">
    <location>
        <position position="463"/>
    </location>
    <ligand>
        <name>L-aspartate</name>
        <dbReference type="ChEBI" id="CHEBI:29991"/>
    </ligand>
</feature>
<feature type="binding site" evidence="1">
    <location>
        <position position="497"/>
    </location>
    <ligand>
        <name>ATP</name>
        <dbReference type="ChEBI" id="CHEBI:30616"/>
    </ligand>
</feature>
<feature type="binding site" evidence="1">
    <location>
        <position position="504"/>
    </location>
    <ligand>
        <name>L-aspartate</name>
        <dbReference type="ChEBI" id="CHEBI:29991"/>
    </ligand>
</feature>
<feature type="binding site" evidence="1">
    <location>
        <begin position="549"/>
        <end position="552"/>
    </location>
    <ligand>
        <name>ATP</name>
        <dbReference type="ChEBI" id="CHEBI:30616"/>
    </ligand>
</feature>
<feature type="site" description="Important for tRNA non-discrimination" evidence="1">
    <location>
        <position position="38"/>
    </location>
</feature>
<feature type="site" description="Important for tRNA non-discrimination" evidence="1">
    <location>
        <position position="89"/>
    </location>
</feature>
<organism>
    <name type="scientific">Anaeromyxobacter dehalogenans (strain 2CP-C)</name>
    <dbReference type="NCBI Taxonomy" id="290397"/>
    <lineage>
        <taxon>Bacteria</taxon>
        <taxon>Pseudomonadati</taxon>
        <taxon>Myxococcota</taxon>
        <taxon>Myxococcia</taxon>
        <taxon>Myxococcales</taxon>
        <taxon>Cystobacterineae</taxon>
        <taxon>Anaeromyxobacteraceae</taxon>
        <taxon>Anaeromyxobacter</taxon>
    </lineage>
</organism>
<proteinExistence type="inferred from homology"/>
<reference key="1">
    <citation type="submission" date="2006-01" db="EMBL/GenBank/DDBJ databases">
        <title>Complete sequence of Anaeromyxobacter dehalogenans 2CP-C.</title>
        <authorList>
            <person name="Copeland A."/>
            <person name="Lucas S."/>
            <person name="Lapidus A."/>
            <person name="Barry K."/>
            <person name="Detter J.C."/>
            <person name="Glavina T."/>
            <person name="Hammon N."/>
            <person name="Israni S."/>
            <person name="Pitluck S."/>
            <person name="Brettin T."/>
            <person name="Bruce D."/>
            <person name="Han C."/>
            <person name="Tapia R."/>
            <person name="Gilna P."/>
            <person name="Kiss H."/>
            <person name="Schmutz J."/>
            <person name="Larimer F."/>
            <person name="Land M."/>
            <person name="Kyrpides N."/>
            <person name="Anderson I."/>
            <person name="Sanford R.A."/>
            <person name="Ritalahti K.M."/>
            <person name="Thomas H.S."/>
            <person name="Kirby J.R."/>
            <person name="Zhulin I.B."/>
            <person name="Loeffler F.E."/>
            <person name="Richardson P."/>
        </authorList>
    </citation>
    <scope>NUCLEOTIDE SEQUENCE [LARGE SCALE GENOMIC DNA]</scope>
    <source>
        <strain>2CP-C</strain>
    </source>
</reference>
<gene>
    <name evidence="1" type="primary">aspS</name>
    <name type="ordered locus">Adeh_2533</name>
</gene>
<name>SYDND_ANADE</name>
<dbReference type="EC" id="6.1.1.23" evidence="1"/>
<dbReference type="EMBL" id="CP000251">
    <property type="protein sequence ID" value="ABC82303.1"/>
    <property type="molecule type" value="Genomic_DNA"/>
</dbReference>
<dbReference type="RefSeq" id="WP_011421585.1">
    <property type="nucleotide sequence ID" value="NC_007760.1"/>
</dbReference>
<dbReference type="SMR" id="Q2IKX7"/>
<dbReference type="STRING" id="290397.Adeh_2533"/>
<dbReference type="KEGG" id="ade:Adeh_2533"/>
<dbReference type="eggNOG" id="COG0173">
    <property type="taxonomic scope" value="Bacteria"/>
</dbReference>
<dbReference type="HOGENOM" id="CLU_014330_3_2_7"/>
<dbReference type="OrthoDB" id="9802326at2"/>
<dbReference type="Proteomes" id="UP000001935">
    <property type="component" value="Chromosome"/>
</dbReference>
<dbReference type="GO" id="GO:0005737">
    <property type="term" value="C:cytoplasm"/>
    <property type="evidence" value="ECO:0007669"/>
    <property type="project" value="UniProtKB-SubCell"/>
</dbReference>
<dbReference type="GO" id="GO:0004815">
    <property type="term" value="F:aspartate-tRNA ligase activity"/>
    <property type="evidence" value="ECO:0007669"/>
    <property type="project" value="UniProtKB-UniRule"/>
</dbReference>
<dbReference type="GO" id="GO:0050560">
    <property type="term" value="F:aspartate-tRNA(Asn) ligase activity"/>
    <property type="evidence" value="ECO:0007669"/>
    <property type="project" value="UniProtKB-EC"/>
</dbReference>
<dbReference type="GO" id="GO:0005524">
    <property type="term" value="F:ATP binding"/>
    <property type="evidence" value="ECO:0007669"/>
    <property type="project" value="UniProtKB-UniRule"/>
</dbReference>
<dbReference type="GO" id="GO:0003676">
    <property type="term" value="F:nucleic acid binding"/>
    <property type="evidence" value="ECO:0007669"/>
    <property type="project" value="InterPro"/>
</dbReference>
<dbReference type="GO" id="GO:0006422">
    <property type="term" value="P:aspartyl-tRNA aminoacylation"/>
    <property type="evidence" value="ECO:0007669"/>
    <property type="project" value="UniProtKB-UniRule"/>
</dbReference>
<dbReference type="CDD" id="cd00777">
    <property type="entry name" value="AspRS_core"/>
    <property type="match status" value="1"/>
</dbReference>
<dbReference type="CDD" id="cd04317">
    <property type="entry name" value="EcAspRS_like_N"/>
    <property type="match status" value="1"/>
</dbReference>
<dbReference type="Gene3D" id="3.30.930.10">
    <property type="entry name" value="Bira Bifunctional Protein, Domain 2"/>
    <property type="match status" value="1"/>
</dbReference>
<dbReference type="Gene3D" id="3.30.1360.30">
    <property type="entry name" value="GAD-like domain"/>
    <property type="match status" value="1"/>
</dbReference>
<dbReference type="Gene3D" id="2.40.50.140">
    <property type="entry name" value="Nucleic acid-binding proteins"/>
    <property type="match status" value="1"/>
</dbReference>
<dbReference type="HAMAP" id="MF_00044">
    <property type="entry name" value="Asp_tRNA_synth_type1"/>
    <property type="match status" value="1"/>
</dbReference>
<dbReference type="InterPro" id="IPR004364">
    <property type="entry name" value="Aa-tRNA-synt_II"/>
</dbReference>
<dbReference type="InterPro" id="IPR006195">
    <property type="entry name" value="aa-tRNA-synth_II"/>
</dbReference>
<dbReference type="InterPro" id="IPR045864">
    <property type="entry name" value="aa-tRNA-synth_II/BPL/LPL"/>
</dbReference>
<dbReference type="InterPro" id="IPR004524">
    <property type="entry name" value="Asp-tRNA-ligase_1"/>
</dbReference>
<dbReference type="InterPro" id="IPR047089">
    <property type="entry name" value="Asp-tRNA-ligase_1_N"/>
</dbReference>
<dbReference type="InterPro" id="IPR002312">
    <property type="entry name" value="Asp/Asn-tRNA-synth_IIb"/>
</dbReference>
<dbReference type="InterPro" id="IPR047090">
    <property type="entry name" value="AspRS_core"/>
</dbReference>
<dbReference type="InterPro" id="IPR004115">
    <property type="entry name" value="GAD-like_sf"/>
</dbReference>
<dbReference type="InterPro" id="IPR029351">
    <property type="entry name" value="GAD_dom"/>
</dbReference>
<dbReference type="InterPro" id="IPR012340">
    <property type="entry name" value="NA-bd_OB-fold"/>
</dbReference>
<dbReference type="InterPro" id="IPR004365">
    <property type="entry name" value="NA-bd_OB_tRNA"/>
</dbReference>
<dbReference type="NCBIfam" id="TIGR00459">
    <property type="entry name" value="aspS_bact"/>
    <property type="match status" value="1"/>
</dbReference>
<dbReference type="NCBIfam" id="NF001750">
    <property type="entry name" value="PRK00476.1"/>
    <property type="match status" value="1"/>
</dbReference>
<dbReference type="PANTHER" id="PTHR22594:SF5">
    <property type="entry name" value="ASPARTATE--TRNA LIGASE, MITOCHONDRIAL"/>
    <property type="match status" value="1"/>
</dbReference>
<dbReference type="PANTHER" id="PTHR22594">
    <property type="entry name" value="ASPARTYL/LYSYL-TRNA SYNTHETASE"/>
    <property type="match status" value="1"/>
</dbReference>
<dbReference type="Pfam" id="PF02938">
    <property type="entry name" value="GAD"/>
    <property type="match status" value="1"/>
</dbReference>
<dbReference type="Pfam" id="PF00152">
    <property type="entry name" value="tRNA-synt_2"/>
    <property type="match status" value="1"/>
</dbReference>
<dbReference type="Pfam" id="PF01336">
    <property type="entry name" value="tRNA_anti-codon"/>
    <property type="match status" value="1"/>
</dbReference>
<dbReference type="PRINTS" id="PR01042">
    <property type="entry name" value="TRNASYNTHASP"/>
</dbReference>
<dbReference type="SUPFAM" id="SSF55681">
    <property type="entry name" value="Class II aaRS and biotin synthetases"/>
    <property type="match status" value="1"/>
</dbReference>
<dbReference type="SUPFAM" id="SSF55261">
    <property type="entry name" value="GAD domain-like"/>
    <property type="match status" value="1"/>
</dbReference>
<dbReference type="SUPFAM" id="SSF50249">
    <property type="entry name" value="Nucleic acid-binding proteins"/>
    <property type="match status" value="1"/>
</dbReference>
<dbReference type="PROSITE" id="PS50862">
    <property type="entry name" value="AA_TRNA_LIGASE_II"/>
    <property type="match status" value="1"/>
</dbReference>
<comment type="function">
    <text evidence="1">Aspartyl-tRNA synthetase with relaxed tRNA specificity since it is able to aspartylate not only its cognate tRNA(Asp) but also tRNA(Asn). Reaction proceeds in two steps: L-aspartate is first activated by ATP to form Asp-AMP and then transferred to the acceptor end of tRNA(Asp/Asn).</text>
</comment>
<comment type="catalytic activity">
    <reaction evidence="1">
        <text>tRNA(Asx) + L-aspartate + ATP = L-aspartyl-tRNA(Asx) + AMP + diphosphate</text>
        <dbReference type="Rhea" id="RHEA:18349"/>
        <dbReference type="Rhea" id="RHEA-COMP:9710"/>
        <dbReference type="Rhea" id="RHEA-COMP:9711"/>
        <dbReference type="ChEBI" id="CHEBI:29991"/>
        <dbReference type="ChEBI" id="CHEBI:30616"/>
        <dbReference type="ChEBI" id="CHEBI:33019"/>
        <dbReference type="ChEBI" id="CHEBI:78442"/>
        <dbReference type="ChEBI" id="CHEBI:78516"/>
        <dbReference type="ChEBI" id="CHEBI:456215"/>
        <dbReference type="EC" id="6.1.1.23"/>
    </reaction>
</comment>
<comment type="subunit">
    <text evidence="1">Homodimer.</text>
</comment>
<comment type="subcellular location">
    <subcellularLocation>
        <location evidence="1">Cytoplasm</location>
    </subcellularLocation>
</comment>
<comment type="similarity">
    <text evidence="1">Belongs to the class-II aminoacyl-tRNA synthetase family. Type 1 subfamily.</text>
</comment>
<evidence type="ECO:0000255" key="1">
    <source>
        <dbReference type="HAMAP-Rule" id="MF_00044"/>
    </source>
</evidence>
<keyword id="KW-0030">Aminoacyl-tRNA synthetase</keyword>
<keyword id="KW-0067">ATP-binding</keyword>
<keyword id="KW-0963">Cytoplasm</keyword>
<keyword id="KW-0436">Ligase</keyword>
<keyword id="KW-0547">Nucleotide-binding</keyword>
<keyword id="KW-0648">Protein biosynthesis</keyword>
<keyword id="KW-1185">Reference proteome</keyword>
<protein>
    <recommendedName>
        <fullName evidence="1">Aspartate--tRNA(Asp/Asn) ligase</fullName>
        <ecNumber evidence="1">6.1.1.23</ecNumber>
    </recommendedName>
    <alternativeName>
        <fullName evidence="1">Aspartyl-tRNA synthetase</fullName>
        <shortName evidence="1">AspRS</shortName>
    </alternativeName>
    <alternativeName>
        <fullName evidence="1">Non-discriminating aspartyl-tRNA synthetase</fullName>
        <shortName evidence="1">ND-AspRS</shortName>
    </alternativeName>
</protein>
<accession>Q2IKX7</accession>
<sequence length="603" mass="67990">MPRFITELKRTHSCGELTKADIGKEVVLFGWVNNRRDHGGAVFIDLRDRAGLTQVVFEEDVRPDVHELAGQLRLEYCVGVRGKVVSRGGNVNPKLPTGEIEVHASDLEIFNRSEPAPFQIEDKIDTGEEKRLQYRYLDLRRAPLQQTLMTRAKVNHLTRNYFTDKGFLELETPFMVKYTPGGARNFLVPSRLNPGKFYALAESPQLFKQLYMMAGFDRYFQIVRCFRDEDLRLDRQPEFTQIDVEMSFVEQNDVFDVMEGLVVKLWKEVLGIEIPRPFQRMPFEESMAKYGNDKPDLRFDMPHVVLTDLVRQHDGGGVPLMHEAVKAKGIVKAMRVPASANFSRTEIDKLEEYVKGMGAKGLARAKVGEGGEWTQSPLAKTITPALRQAINDACEAKAGDLLLFQFGKESVVHTVMANLRVHLAKRMGLIPEYGSGGAWRFLWVVNPPLFEYDEESGQWAAAHHAFTRPHDSDLQFLESDPGKVNCYRYDLVLNGFEIGGGSIRLHDPEVQARVFKAMGISDEEARSKFGFLLDALKMGAPPHGGIALGMDRLVMLLTGAESLRDVVAWPKTQKGTDLMTGAPGDVDARQLRELYVKSTFEPK</sequence>